<accession>Q2W4R7</accession>
<gene>
    <name evidence="1" type="primary">fabH</name>
    <name type="ordered locus">amb2354</name>
</gene>
<sequence length="324" mass="34193">MIVRSQIIGCGSYLPSRLVTNAELAAQVDTSDEWIVERSGIRQRHIAAEGETTSDLATNAALRALEAAGISGSAVDLVIVATATPDNTFPATATKVQSRIGMRHGFAFDVQAVCSGFVYALSVADNFIKSGQVQTALVIGAETFSRILDWTDRTTCVLFGDGAGAVVLRASRGKGSSADRGILSTHLHSDGSHYDLLYVDGGPSSTQTVGHVHMEGREVFRHAVINLAAVVGEALAANDLKASDIDWVVPHQANRRIIEGTAKKLGFPLDKMVMTVERHANTSAASIPLALTEAVGDGRIKPGQLVLLEAMGGGFTWGSALVRM</sequence>
<reference key="1">
    <citation type="journal article" date="2005" name="DNA Res.">
        <title>Complete genome sequence of the facultative anaerobic magnetotactic bacterium Magnetospirillum sp. strain AMB-1.</title>
        <authorList>
            <person name="Matsunaga T."/>
            <person name="Okamura Y."/>
            <person name="Fukuda Y."/>
            <person name="Wahyudi A.T."/>
            <person name="Murase Y."/>
            <person name="Takeyama H."/>
        </authorList>
    </citation>
    <scope>NUCLEOTIDE SEQUENCE [LARGE SCALE GENOMIC DNA]</scope>
    <source>
        <strain>ATCC 700264 / AMB-1</strain>
    </source>
</reference>
<name>FABH_PARM1</name>
<organism>
    <name type="scientific">Paramagnetospirillum magneticum (strain ATCC 700264 / AMB-1)</name>
    <name type="common">Magnetospirillum magneticum</name>
    <dbReference type="NCBI Taxonomy" id="342108"/>
    <lineage>
        <taxon>Bacteria</taxon>
        <taxon>Pseudomonadati</taxon>
        <taxon>Pseudomonadota</taxon>
        <taxon>Alphaproteobacteria</taxon>
        <taxon>Rhodospirillales</taxon>
        <taxon>Magnetospirillaceae</taxon>
        <taxon>Paramagnetospirillum</taxon>
    </lineage>
</organism>
<protein>
    <recommendedName>
        <fullName evidence="1">Beta-ketoacyl-[acyl-carrier-protein] synthase III</fullName>
        <shortName evidence="1">Beta-ketoacyl-ACP synthase III</shortName>
        <shortName evidence="1">KAS III</shortName>
        <ecNumber evidence="1">2.3.1.180</ecNumber>
    </recommendedName>
    <alternativeName>
        <fullName evidence="1">3-oxoacyl-[acyl-carrier-protein] synthase 3</fullName>
    </alternativeName>
    <alternativeName>
        <fullName evidence="1">3-oxoacyl-[acyl-carrier-protein] synthase III</fullName>
    </alternativeName>
</protein>
<proteinExistence type="inferred from homology"/>
<comment type="function">
    <text evidence="1">Catalyzes the condensation reaction of fatty acid synthesis by the addition to an acyl acceptor of two carbons from malonyl-ACP. Catalyzes the first condensation reaction which initiates fatty acid synthesis and may therefore play a role in governing the total rate of fatty acid production. Possesses both acetoacetyl-ACP synthase and acetyl transacylase activities. Its substrate specificity determines the biosynthesis of branched-chain and/or straight-chain of fatty acids.</text>
</comment>
<comment type="catalytic activity">
    <reaction evidence="1">
        <text>malonyl-[ACP] + acetyl-CoA + H(+) = 3-oxobutanoyl-[ACP] + CO2 + CoA</text>
        <dbReference type="Rhea" id="RHEA:12080"/>
        <dbReference type="Rhea" id="RHEA-COMP:9623"/>
        <dbReference type="Rhea" id="RHEA-COMP:9625"/>
        <dbReference type="ChEBI" id="CHEBI:15378"/>
        <dbReference type="ChEBI" id="CHEBI:16526"/>
        <dbReference type="ChEBI" id="CHEBI:57287"/>
        <dbReference type="ChEBI" id="CHEBI:57288"/>
        <dbReference type="ChEBI" id="CHEBI:78449"/>
        <dbReference type="ChEBI" id="CHEBI:78450"/>
        <dbReference type="EC" id="2.3.1.180"/>
    </reaction>
</comment>
<comment type="pathway">
    <text evidence="1">Lipid metabolism; fatty acid biosynthesis.</text>
</comment>
<comment type="subunit">
    <text evidence="1">Homodimer.</text>
</comment>
<comment type="subcellular location">
    <subcellularLocation>
        <location evidence="1">Cytoplasm</location>
    </subcellularLocation>
</comment>
<comment type="domain">
    <text evidence="1">The last Arg residue of the ACP-binding site is essential for the weak association between ACP/AcpP and FabH.</text>
</comment>
<comment type="similarity">
    <text evidence="1">Belongs to the thiolase-like superfamily. FabH family.</text>
</comment>
<feature type="chain" id="PRO_1000056375" description="Beta-ketoacyl-[acyl-carrier-protein] synthase III">
    <location>
        <begin position="1"/>
        <end position="324"/>
    </location>
</feature>
<feature type="region of interest" description="ACP-binding" evidence="1">
    <location>
        <begin position="252"/>
        <end position="256"/>
    </location>
</feature>
<feature type="active site" evidence="1">
    <location>
        <position position="114"/>
    </location>
</feature>
<feature type="active site" evidence="1">
    <location>
        <position position="251"/>
    </location>
</feature>
<feature type="active site" evidence="1">
    <location>
        <position position="281"/>
    </location>
</feature>
<evidence type="ECO:0000255" key="1">
    <source>
        <dbReference type="HAMAP-Rule" id="MF_01815"/>
    </source>
</evidence>
<dbReference type="EC" id="2.3.1.180" evidence="1"/>
<dbReference type="EMBL" id="AP007255">
    <property type="protein sequence ID" value="BAE51158.1"/>
    <property type="molecule type" value="Genomic_DNA"/>
</dbReference>
<dbReference type="RefSeq" id="WP_011384750.1">
    <property type="nucleotide sequence ID" value="NC_007626.1"/>
</dbReference>
<dbReference type="SMR" id="Q2W4R7"/>
<dbReference type="STRING" id="342108.amb2354"/>
<dbReference type="KEGG" id="mag:amb2354"/>
<dbReference type="HOGENOM" id="CLU_039592_3_1_5"/>
<dbReference type="OrthoDB" id="9815506at2"/>
<dbReference type="UniPathway" id="UPA00094"/>
<dbReference type="Proteomes" id="UP000007058">
    <property type="component" value="Chromosome"/>
</dbReference>
<dbReference type="GO" id="GO:0005737">
    <property type="term" value="C:cytoplasm"/>
    <property type="evidence" value="ECO:0007669"/>
    <property type="project" value="UniProtKB-SubCell"/>
</dbReference>
<dbReference type="GO" id="GO:0004315">
    <property type="term" value="F:3-oxoacyl-[acyl-carrier-protein] synthase activity"/>
    <property type="evidence" value="ECO:0007669"/>
    <property type="project" value="InterPro"/>
</dbReference>
<dbReference type="GO" id="GO:0033818">
    <property type="term" value="F:beta-ketoacyl-acyl-carrier-protein synthase III activity"/>
    <property type="evidence" value="ECO:0007669"/>
    <property type="project" value="UniProtKB-UniRule"/>
</dbReference>
<dbReference type="GO" id="GO:0006633">
    <property type="term" value="P:fatty acid biosynthetic process"/>
    <property type="evidence" value="ECO:0007669"/>
    <property type="project" value="UniProtKB-UniRule"/>
</dbReference>
<dbReference type="CDD" id="cd00830">
    <property type="entry name" value="KAS_III"/>
    <property type="match status" value="1"/>
</dbReference>
<dbReference type="FunFam" id="3.40.47.10:FF:000004">
    <property type="entry name" value="3-oxoacyl-[acyl-carrier-protein] synthase 3"/>
    <property type="match status" value="1"/>
</dbReference>
<dbReference type="Gene3D" id="3.40.47.10">
    <property type="match status" value="1"/>
</dbReference>
<dbReference type="HAMAP" id="MF_01815">
    <property type="entry name" value="FabH"/>
    <property type="match status" value="1"/>
</dbReference>
<dbReference type="InterPro" id="IPR013747">
    <property type="entry name" value="ACP_syn_III_C"/>
</dbReference>
<dbReference type="InterPro" id="IPR013751">
    <property type="entry name" value="ACP_syn_III_N"/>
</dbReference>
<dbReference type="InterPro" id="IPR004655">
    <property type="entry name" value="FabH"/>
</dbReference>
<dbReference type="InterPro" id="IPR016039">
    <property type="entry name" value="Thiolase-like"/>
</dbReference>
<dbReference type="NCBIfam" id="TIGR00747">
    <property type="entry name" value="fabH"/>
    <property type="match status" value="1"/>
</dbReference>
<dbReference type="NCBIfam" id="NF006829">
    <property type="entry name" value="PRK09352.1"/>
    <property type="match status" value="1"/>
</dbReference>
<dbReference type="PANTHER" id="PTHR43091">
    <property type="entry name" value="3-OXOACYL-[ACYL-CARRIER-PROTEIN] SYNTHASE"/>
    <property type="match status" value="1"/>
</dbReference>
<dbReference type="PANTHER" id="PTHR43091:SF1">
    <property type="entry name" value="BETA-KETOACYL-[ACYL-CARRIER-PROTEIN] SYNTHASE III, CHLOROPLASTIC"/>
    <property type="match status" value="1"/>
</dbReference>
<dbReference type="Pfam" id="PF08545">
    <property type="entry name" value="ACP_syn_III"/>
    <property type="match status" value="1"/>
</dbReference>
<dbReference type="Pfam" id="PF08541">
    <property type="entry name" value="ACP_syn_III_C"/>
    <property type="match status" value="1"/>
</dbReference>
<dbReference type="SUPFAM" id="SSF53901">
    <property type="entry name" value="Thiolase-like"/>
    <property type="match status" value="1"/>
</dbReference>
<keyword id="KW-0012">Acyltransferase</keyword>
<keyword id="KW-0963">Cytoplasm</keyword>
<keyword id="KW-0275">Fatty acid biosynthesis</keyword>
<keyword id="KW-0276">Fatty acid metabolism</keyword>
<keyword id="KW-0444">Lipid biosynthesis</keyword>
<keyword id="KW-0443">Lipid metabolism</keyword>
<keyword id="KW-0511">Multifunctional enzyme</keyword>
<keyword id="KW-0808">Transferase</keyword>